<accession>A6WUG6</accession>
<organism>
    <name type="scientific">Shewanella baltica (strain OS185)</name>
    <dbReference type="NCBI Taxonomy" id="402882"/>
    <lineage>
        <taxon>Bacteria</taxon>
        <taxon>Pseudomonadati</taxon>
        <taxon>Pseudomonadota</taxon>
        <taxon>Gammaproteobacteria</taxon>
        <taxon>Alteromonadales</taxon>
        <taxon>Shewanellaceae</taxon>
        <taxon>Shewanella</taxon>
    </lineage>
</organism>
<proteinExistence type="inferred from homology"/>
<dbReference type="EC" id="1.1.1.103" evidence="1"/>
<dbReference type="EMBL" id="CP000753">
    <property type="protein sequence ID" value="ABS10455.1"/>
    <property type="molecule type" value="Genomic_DNA"/>
</dbReference>
<dbReference type="RefSeq" id="WP_012090660.1">
    <property type="nucleotide sequence ID" value="NC_009665.1"/>
</dbReference>
<dbReference type="SMR" id="A6WUG6"/>
<dbReference type="KEGG" id="sbm:Shew185_4341"/>
<dbReference type="HOGENOM" id="CLU_026673_11_0_6"/>
<dbReference type="UniPathway" id="UPA00046">
    <property type="reaction ID" value="UER00505"/>
</dbReference>
<dbReference type="GO" id="GO:0005737">
    <property type="term" value="C:cytoplasm"/>
    <property type="evidence" value="ECO:0007669"/>
    <property type="project" value="UniProtKB-SubCell"/>
</dbReference>
<dbReference type="GO" id="GO:0008743">
    <property type="term" value="F:L-threonine 3-dehydrogenase activity"/>
    <property type="evidence" value="ECO:0007669"/>
    <property type="project" value="UniProtKB-UniRule"/>
</dbReference>
<dbReference type="GO" id="GO:0008270">
    <property type="term" value="F:zinc ion binding"/>
    <property type="evidence" value="ECO:0007669"/>
    <property type="project" value="UniProtKB-UniRule"/>
</dbReference>
<dbReference type="GO" id="GO:0019518">
    <property type="term" value="P:L-threonine catabolic process to glycine"/>
    <property type="evidence" value="ECO:0007669"/>
    <property type="project" value="UniProtKB-UniPathway"/>
</dbReference>
<dbReference type="Gene3D" id="3.90.180.10">
    <property type="entry name" value="Medium-chain alcohol dehydrogenases, catalytic domain"/>
    <property type="match status" value="1"/>
</dbReference>
<dbReference type="Gene3D" id="3.40.50.720">
    <property type="entry name" value="NAD(P)-binding Rossmann-like Domain"/>
    <property type="match status" value="1"/>
</dbReference>
<dbReference type="HAMAP" id="MF_00627">
    <property type="entry name" value="Thr_dehydrog"/>
    <property type="match status" value="1"/>
</dbReference>
<dbReference type="InterPro" id="IPR013149">
    <property type="entry name" value="ADH-like_C"/>
</dbReference>
<dbReference type="InterPro" id="IPR013154">
    <property type="entry name" value="ADH-like_N"/>
</dbReference>
<dbReference type="InterPro" id="IPR002328">
    <property type="entry name" value="ADH_Zn_CS"/>
</dbReference>
<dbReference type="InterPro" id="IPR011032">
    <property type="entry name" value="GroES-like_sf"/>
</dbReference>
<dbReference type="InterPro" id="IPR004627">
    <property type="entry name" value="L-Threonine_3-DHase"/>
</dbReference>
<dbReference type="InterPro" id="IPR036291">
    <property type="entry name" value="NAD(P)-bd_dom_sf"/>
</dbReference>
<dbReference type="InterPro" id="IPR020843">
    <property type="entry name" value="PKS_ER"/>
</dbReference>
<dbReference type="InterPro" id="IPR050129">
    <property type="entry name" value="Zn_alcohol_dh"/>
</dbReference>
<dbReference type="NCBIfam" id="NF003808">
    <property type="entry name" value="PRK05396.1"/>
    <property type="match status" value="1"/>
</dbReference>
<dbReference type="NCBIfam" id="TIGR00692">
    <property type="entry name" value="tdh"/>
    <property type="match status" value="1"/>
</dbReference>
<dbReference type="PANTHER" id="PTHR43401">
    <property type="entry name" value="L-THREONINE 3-DEHYDROGENASE"/>
    <property type="match status" value="1"/>
</dbReference>
<dbReference type="PANTHER" id="PTHR43401:SF2">
    <property type="entry name" value="L-THREONINE 3-DEHYDROGENASE"/>
    <property type="match status" value="1"/>
</dbReference>
<dbReference type="Pfam" id="PF08240">
    <property type="entry name" value="ADH_N"/>
    <property type="match status" value="1"/>
</dbReference>
<dbReference type="Pfam" id="PF00107">
    <property type="entry name" value="ADH_zinc_N"/>
    <property type="match status" value="1"/>
</dbReference>
<dbReference type="SMART" id="SM00829">
    <property type="entry name" value="PKS_ER"/>
    <property type="match status" value="1"/>
</dbReference>
<dbReference type="SUPFAM" id="SSF50129">
    <property type="entry name" value="GroES-like"/>
    <property type="match status" value="1"/>
</dbReference>
<dbReference type="SUPFAM" id="SSF51735">
    <property type="entry name" value="NAD(P)-binding Rossmann-fold domains"/>
    <property type="match status" value="1"/>
</dbReference>
<dbReference type="PROSITE" id="PS00059">
    <property type="entry name" value="ADH_ZINC"/>
    <property type="match status" value="1"/>
</dbReference>
<evidence type="ECO:0000255" key="1">
    <source>
        <dbReference type="HAMAP-Rule" id="MF_00627"/>
    </source>
</evidence>
<name>TDH_SHEB8</name>
<gene>
    <name evidence="1" type="primary">tdh</name>
    <name type="ordered locus">Shew185_4341</name>
</gene>
<sequence length="341" mass="37236">MKALSKLKAEKGIWLVDAPKPVMGHNDLLIKIKKTAICGTDMHIYNWDEWSQKTIPVPMVVGHEYVGEVVDIGQEVRGFKIGDRVSGEGHITCGHCRNCRAGRTHLCRNTSGVGVNREGSFAEYLVIPAFNAFKIPDDISDDLASIFDPFGNAVHTALSFDLVGEDVLITGAGPIGIMAAAVCRHVGARHVVITDVNEYRLELARKMGATRAVNVSKENLKDVMKELGMTEGFDVGLEMSGVPSAFHAMLDTMNHGGKVAMLGIPSGEMAIDWSKVIFKGLVIKGIYGREMFETWYKMASLIQSGLDISPIITHHFKIDDFQQGFDAMGSGQSGKVILSWD</sequence>
<reference key="1">
    <citation type="submission" date="2007-07" db="EMBL/GenBank/DDBJ databases">
        <title>Complete sequence of chromosome of Shewanella baltica OS185.</title>
        <authorList>
            <consortium name="US DOE Joint Genome Institute"/>
            <person name="Copeland A."/>
            <person name="Lucas S."/>
            <person name="Lapidus A."/>
            <person name="Barry K."/>
            <person name="Glavina del Rio T."/>
            <person name="Dalin E."/>
            <person name="Tice H."/>
            <person name="Pitluck S."/>
            <person name="Sims D."/>
            <person name="Brettin T."/>
            <person name="Bruce D."/>
            <person name="Detter J.C."/>
            <person name="Han C."/>
            <person name="Schmutz J."/>
            <person name="Larimer F."/>
            <person name="Land M."/>
            <person name="Hauser L."/>
            <person name="Kyrpides N."/>
            <person name="Mikhailova N."/>
            <person name="Brettar I."/>
            <person name="Rodrigues J."/>
            <person name="Konstantinidis K."/>
            <person name="Tiedje J."/>
            <person name="Richardson P."/>
        </authorList>
    </citation>
    <scope>NUCLEOTIDE SEQUENCE [LARGE SCALE GENOMIC DNA]</scope>
    <source>
        <strain>OS185</strain>
    </source>
</reference>
<keyword id="KW-0963">Cytoplasm</keyword>
<keyword id="KW-0479">Metal-binding</keyword>
<keyword id="KW-0520">NAD</keyword>
<keyword id="KW-0560">Oxidoreductase</keyword>
<keyword id="KW-0862">Zinc</keyword>
<protein>
    <recommendedName>
        <fullName evidence="1">L-threonine 3-dehydrogenase</fullName>
        <shortName evidence="1">TDH</shortName>
        <ecNumber evidence="1">1.1.1.103</ecNumber>
    </recommendedName>
</protein>
<comment type="function">
    <text evidence="1">Catalyzes the NAD(+)-dependent oxidation of L-threonine to 2-amino-3-ketobutyrate.</text>
</comment>
<comment type="catalytic activity">
    <reaction evidence="1">
        <text>L-threonine + NAD(+) = (2S)-2-amino-3-oxobutanoate + NADH + H(+)</text>
        <dbReference type="Rhea" id="RHEA:13161"/>
        <dbReference type="ChEBI" id="CHEBI:15378"/>
        <dbReference type="ChEBI" id="CHEBI:57540"/>
        <dbReference type="ChEBI" id="CHEBI:57926"/>
        <dbReference type="ChEBI" id="CHEBI:57945"/>
        <dbReference type="ChEBI" id="CHEBI:78948"/>
        <dbReference type="EC" id="1.1.1.103"/>
    </reaction>
</comment>
<comment type="cofactor">
    <cofactor evidence="1">
        <name>Zn(2+)</name>
        <dbReference type="ChEBI" id="CHEBI:29105"/>
    </cofactor>
    <text evidence="1">Binds 2 Zn(2+) ions per subunit.</text>
</comment>
<comment type="pathway">
    <text evidence="1">Amino-acid degradation; L-threonine degradation via oxydo-reductase pathway; glycine from L-threonine: step 1/2.</text>
</comment>
<comment type="subunit">
    <text evidence="1">Homotetramer.</text>
</comment>
<comment type="subcellular location">
    <subcellularLocation>
        <location evidence="1">Cytoplasm</location>
    </subcellularLocation>
</comment>
<comment type="similarity">
    <text evidence="1">Belongs to the zinc-containing alcohol dehydrogenase family.</text>
</comment>
<feature type="chain" id="PRO_1000051653" description="L-threonine 3-dehydrogenase">
    <location>
        <begin position="1"/>
        <end position="341"/>
    </location>
</feature>
<feature type="active site" description="Charge relay system" evidence="1">
    <location>
        <position position="40"/>
    </location>
</feature>
<feature type="active site" description="Charge relay system" evidence="1">
    <location>
        <position position="43"/>
    </location>
</feature>
<feature type="binding site" evidence="1">
    <location>
        <position position="38"/>
    </location>
    <ligand>
        <name>Zn(2+)</name>
        <dbReference type="ChEBI" id="CHEBI:29105"/>
        <label>1</label>
        <note>catalytic</note>
    </ligand>
</feature>
<feature type="binding site" evidence="1">
    <location>
        <position position="63"/>
    </location>
    <ligand>
        <name>Zn(2+)</name>
        <dbReference type="ChEBI" id="CHEBI:29105"/>
        <label>1</label>
        <note>catalytic</note>
    </ligand>
</feature>
<feature type="binding site" evidence="1">
    <location>
        <position position="64"/>
    </location>
    <ligand>
        <name>Zn(2+)</name>
        <dbReference type="ChEBI" id="CHEBI:29105"/>
        <label>1</label>
        <note>catalytic</note>
    </ligand>
</feature>
<feature type="binding site" evidence="1">
    <location>
        <position position="93"/>
    </location>
    <ligand>
        <name>Zn(2+)</name>
        <dbReference type="ChEBI" id="CHEBI:29105"/>
        <label>2</label>
    </ligand>
</feature>
<feature type="binding site" evidence="1">
    <location>
        <position position="96"/>
    </location>
    <ligand>
        <name>Zn(2+)</name>
        <dbReference type="ChEBI" id="CHEBI:29105"/>
        <label>2</label>
    </ligand>
</feature>
<feature type="binding site" evidence="1">
    <location>
        <position position="99"/>
    </location>
    <ligand>
        <name>Zn(2+)</name>
        <dbReference type="ChEBI" id="CHEBI:29105"/>
        <label>2</label>
    </ligand>
</feature>
<feature type="binding site" evidence="1">
    <location>
        <position position="107"/>
    </location>
    <ligand>
        <name>Zn(2+)</name>
        <dbReference type="ChEBI" id="CHEBI:29105"/>
        <label>2</label>
    </ligand>
</feature>
<feature type="binding site" evidence="1">
    <location>
        <position position="175"/>
    </location>
    <ligand>
        <name>NAD(+)</name>
        <dbReference type="ChEBI" id="CHEBI:57540"/>
    </ligand>
</feature>
<feature type="binding site" evidence="1">
    <location>
        <position position="195"/>
    </location>
    <ligand>
        <name>NAD(+)</name>
        <dbReference type="ChEBI" id="CHEBI:57540"/>
    </ligand>
</feature>
<feature type="binding site" evidence="1">
    <location>
        <position position="200"/>
    </location>
    <ligand>
        <name>NAD(+)</name>
        <dbReference type="ChEBI" id="CHEBI:57540"/>
    </ligand>
</feature>
<feature type="binding site" evidence="1">
    <location>
        <begin position="262"/>
        <end position="264"/>
    </location>
    <ligand>
        <name>NAD(+)</name>
        <dbReference type="ChEBI" id="CHEBI:57540"/>
    </ligand>
</feature>
<feature type="binding site" evidence="1">
    <location>
        <begin position="286"/>
        <end position="287"/>
    </location>
    <ligand>
        <name>NAD(+)</name>
        <dbReference type="ChEBI" id="CHEBI:57540"/>
    </ligand>
</feature>
<feature type="site" description="Important for catalytic activity for the proton relay mechanism but does not participate directly in the coordination of zinc atom" evidence="1">
    <location>
        <position position="148"/>
    </location>
</feature>